<comment type="function">
    <text evidence="1 3">Inhibits tetrodotoxin-sensitive sodium channels (Nav) (By similarity). Intracranial injection into mice causes strong convulsions and death. Intrathorax injection into crickets causes paralysis prolonged for 2 minutes, followed by recovery.</text>
</comment>
<comment type="subcellular location">
    <subcellularLocation>
        <location evidence="3">Secreted</location>
    </subcellularLocation>
</comment>
<comment type="tissue specificity">
    <text evidence="5">Expressed by the venom gland.</text>
</comment>
<comment type="domain">
    <text evidence="1">The presence of a 'disulfide through disulfide knot' structurally defines this protein as a knottin.</text>
</comment>
<comment type="mass spectrometry"/>
<comment type="similarity">
    <text evidence="4">Belongs to the neurotoxin 06 (delta-actx) family.</text>
</comment>
<reference key="1">
    <citation type="journal article" date="2004" name="Toxicon">
        <title>Rapid and efficient identification of cysteine-rich peptides by random screening of a venom gland cDNA library from the hexathelid spider Macrothele gigas.</title>
        <authorList>
            <person name="Satake H."/>
            <person name="Villegas E."/>
            <person name="Oshiro N."/>
            <person name="Terada K."/>
            <person name="Shinada T."/>
            <person name="Corzo G."/>
        </authorList>
    </citation>
    <scope>NUCLEOTIDE SEQUENCE [MRNA]</scope>
    <scope>FUNCTION</scope>
    <scope>MASS SPECTROMETRY</scope>
    <scope>SUBCELLULAR LOCATION</scope>
    <source>
        <tissue>Venom</tissue>
        <tissue>Venom gland</tissue>
    </source>
</reference>
<dbReference type="EMBL" id="AB121206">
    <property type="protein sequence ID" value="BAD13413.1"/>
    <property type="molecule type" value="mRNA"/>
</dbReference>
<dbReference type="SMR" id="Q75WG5"/>
<dbReference type="ArachnoServer" id="AS000366">
    <property type="toxin name" value="delta-hexatoxin-Mg1b"/>
</dbReference>
<dbReference type="GO" id="GO:0005576">
    <property type="term" value="C:extracellular region"/>
    <property type="evidence" value="ECO:0007669"/>
    <property type="project" value="UniProtKB-SubCell"/>
</dbReference>
<dbReference type="GO" id="GO:0019871">
    <property type="term" value="F:sodium channel inhibitor activity"/>
    <property type="evidence" value="ECO:0007669"/>
    <property type="project" value="InterPro"/>
</dbReference>
<dbReference type="GO" id="GO:0090729">
    <property type="term" value="F:toxin activity"/>
    <property type="evidence" value="ECO:0007669"/>
    <property type="project" value="UniProtKB-KW"/>
</dbReference>
<dbReference type="Gene3D" id="4.10.40.10">
    <property type="match status" value="1"/>
</dbReference>
<dbReference type="InterPro" id="IPR008017">
    <property type="entry name" value="Delta-hexatoxin"/>
</dbReference>
<dbReference type="Pfam" id="PF05353">
    <property type="entry name" value="Atracotoxin"/>
    <property type="match status" value="1"/>
</dbReference>
<dbReference type="SUPFAM" id="SSF57059">
    <property type="entry name" value="omega toxin-like"/>
    <property type="match status" value="1"/>
</dbReference>
<proteinExistence type="evidence at protein level"/>
<sequence>MKILEKALLENDSAAEEESRNLRTKRCARKRAWCEKTENCCCPMKCIYAWYNGQSSCDHTISTIWTSCPK</sequence>
<feature type="signal peptide" evidence="5">
    <location>
        <begin position="1"/>
        <end position="26"/>
    </location>
</feature>
<feature type="chain" id="PRO_0000247527" description="Delta-hexatoxin-Mg1b" evidence="5">
    <location>
        <begin position="27"/>
        <end position="70"/>
    </location>
</feature>
<feature type="disulfide bond" evidence="2">
    <location>
        <begin position="27"/>
        <end position="41"/>
    </location>
</feature>
<feature type="disulfide bond" evidence="2">
    <location>
        <begin position="34"/>
        <end position="46"/>
    </location>
</feature>
<feature type="disulfide bond" evidence="2">
    <location>
        <begin position="40"/>
        <end position="57"/>
    </location>
</feature>
<feature type="disulfide bond" evidence="2">
    <location>
        <begin position="42"/>
        <end position="68"/>
    </location>
</feature>
<keyword id="KW-1015">Disulfide bond</keyword>
<keyword id="KW-0872">Ion channel impairing toxin</keyword>
<keyword id="KW-0960">Knottin</keyword>
<keyword id="KW-0528">Neurotoxin</keyword>
<keyword id="KW-0964">Secreted</keyword>
<keyword id="KW-0732">Signal</keyword>
<keyword id="KW-0800">Toxin</keyword>
<keyword id="KW-0738">Voltage-gated sodium channel impairing toxin</keyword>
<organism>
    <name type="scientific">Macrothele gigas</name>
    <name type="common">Japanese funnel web spider</name>
    <dbReference type="NCBI Taxonomy" id="223896"/>
    <lineage>
        <taxon>Eukaryota</taxon>
        <taxon>Metazoa</taxon>
        <taxon>Ecdysozoa</taxon>
        <taxon>Arthropoda</taxon>
        <taxon>Chelicerata</taxon>
        <taxon>Arachnida</taxon>
        <taxon>Araneae</taxon>
        <taxon>Mygalomorphae</taxon>
        <taxon>Macrothelidae</taxon>
        <taxon>Macrothele</taxon>
    </lineage>
</organism>
<name>TXM14_MACGS</name>
<evidence type="ECO:0000250" key="1"/>
<evidence type="ECO:0000250" key="2">
    <source>
        <dbReference type="UniProtKB" id="P13494"/>
    </source>
</evidence>
<evidence type="ECO:0000269" key="3">
    <source>
    </source>
</evidence>
<evidence type="ECO:0000305" key="4"/>
<evidence type="ECO:0000305" key="5">
    <source>
    </source>
</evidence>
<protein>
    <recommendedName>
        <fullName>Delta-hexatoxin-Mg1b</fullName>
        <shortName>Delta-HXTX-Mg1b</shortName>
    </recommendedName>
    <alternativeName>
        <fullName>Delta-atracotoxin-9</fullName>
    </alternativeName>
    <alternativeName>
        <fullName>Neurotoxin magi-14</fullName>
    </alternativeName>
</protein>
<accession>Q75WG5</accession>